<protein>
    <recommendedName>
        <fullName>Protein RecA</fullName>
    </recommendedName>
    <alternativeName>
        <fullName>Recombinase A</fullName>
    </alternativeName>
</protein>
<name>RECA_NEISI</name>
<comment type="function">
    <text evidence="1">Can catalyze the hydrolysis of ATP in the presence of single-stranded DNA, the ATP-dependent uptake of single-stranded DNA by duplex DNA, and the ATP-dependent hybridization of homologous single-stranded DNAs. It interacts with LexA causing its activation and leading to its autocatalytic cleavage (By similarity).</text>
</comment>
<comment type="subcellular location">
    <subcellularLocation>
        <location evidence="1">Cytoplasm</location>
    </subcellularLocation>
</comment>
<comment type="similarity">
    <text evidence="2">Belongs to the RecA family.</text>
</comment>
<organism>
    <name type="scientific">Neisseria sicca</name>
    <dbReference type="NCBI Taxonomy" id="490"/>
    <lineage>
        <taxon>Bacteria</taxon>
        <taxon>Pseudomonadati</taxon>
        <taxon>Pseudomonadota</taxon>
        <taxon>Betaproteobacteria</taxon>
        <taxon>Neisseriales</taxon>
        <taxon>Neisseriaceae</taxon>
        <taxon>Neisseria</taxon>
    </lineage>
</organism>
<accession>O86411</accession>
<keyword id="KW-0067">ATP-binding</keyword>
<keyword id="KW-0963">Cytoplasm</keyword>
<keyword id="KW-0227">DNA damage</keyword>
<keyword id="KW-0233">DNA recombination</keyword>
<keyword id="KW-0234">DNA repair</keyword>
<keyword id="KW-0238">DNA-binding</keyword>
<keyword id="KW-0547">Nucleotide-binding</keyword>
<keyword id="KW-0742">SOS response</keyword>
<evidence type="ECO:0000250" key="1"/>
<evidence type="ECO:0000305" key="2"/>
<dbReference type="EMBL" id="AJ223872">
    <property type="protein sequence ID" value="CAA11603.1"/>
    <property type="molecule type" value="Genomic_DNA"/>
</dbReference>
<dbReference type="SMR" id="O86411"/>
<dbReference type="GO" id="GO:0005829">
    <property type="term" value="C:cytosol"/>
    <property type="evidence" value="ECO:0007669"/>
    <property type="project" value="TreeGrafter"/>
</dbReference>
<dbReference type="GO" id="GO:0005524">
    <property type="term" value="F:ATP binding"/>
    <property type="evidence" value="ECO:0007669"/>
    <property type="project" value="UniProtKB-KW"/>
</dbReference>
<dbReference type="GO" id="GO:0016887">
    <property type="term" value="F:ATP hydrolysis activity"/>
    <property type="evidence" value="ECO:0007669"/>
    <property type="project" value="InterPro"/>
</dbReference>
<dbReference type="GO" id="GO:0140664">
    <property type="term" value="F:ATP-dependent DNA damage sensor activity"/>
    <property type="evidence" value="ECO:0007669"/>
    <property type="project" value="InterPro"/>
</dbReference>
<dbReference type="GO" id="GO:0003697">
    <property type="term" value="F:single-stranded DNA binding"/>
    <property type="evidence" value="ECO:0007669"/>
    <property type="project" value="InterPro"/>
</dbReference>
<dbReference type="GO" id="GO:0006310">
    <property type="term" value="P:DNA recombination"/>
    <property type="evidence" value="ECO:0007669"/>
    <property type="project" value="UniProtKB-KW"/>
</dbReference>
<dbReference type="GO" id="GO:0006281">
    <property type="term" value="P:DNA repair"/>
    <property type="evidence" value="ECO:0007669"/>
    <property type="project" value="UniProtKB-KW"/>
</dbReference>
<dbReference type="GO" id="GO:0009432">
    <property type="term" value="P:SOS response"/>
    <property type="evidence" value="ECO:0007669"/>
    <property type="project" value="UniProtKB-KW"/>
</dbReference>
<dbReference type="CDD" id="cd00983">
    <property type="entry name" value="RecA"/>
    <property type="match status" value="1"/>
</dbReference>
<dbReference type="FunFam" id="3.40.50.300:FF:000087">
    <property type="entry name" value="Recombinase RecA"/>
    <property type="match status" value="1"/>
</dbReference>
<dbReference type="Gene3D" id="3.40.50.300">
    <property type="entry name" value="P-loop containing nucleotide triphosphate hydrolases"/>
    <property type="match status" value="1"/>
</dbReference>
<dbReference type="InterPro" id="IPR003593">
    <property type="entry name" value="AAA+_ATPase"/>
</dbReference>
<dbReference type="InterPro" id="IPR013765">
    <property type="entry name" value="DNA_recomb/repair_RecA"/>
</dbReference>
<dbReference type="InterPro" id="IPR020584">
    <property type="entry name" value="DNA_recomb/repair_RecA_CS"/>
</dbReference>
<dbReference type="InterPro" id="IPR027417">
    <property type="entry name" value="P-loop_NTPase"/>
</dbReference>
<dbReference type="InterPro" id="IPR049428">
    <property type="entry name" value="RecA-like_N"/>
</dbReference>
<dbReference type="InterPro" id="IPR020588">
    <property type="entry name" value="RecA_ATP-bd"/>
</dbReference>
<dbReference type="InterPro" id="IPR020587">
    <property type="entry name" value="RecA_monomer-monomer_interface"/>
</dbReference>
<dbReference type="NCBIfam" id="TIGR02012">
    <property type="entry name" value="tigrfam_recA"/>
    <property type="match status" value="1"/>
</dbReference>
<dbReference type="PANTHER" id="PTHR45900:SF1">
    <property type="entry name" value="MITOCHONDRIAL DNA REPAIR PROTEIN RECA HOMOLOG-RELATED"/>
    <property type="match status" value="1"/>
</dbReference>
<dbReference type="PANTHER" id="PTHR45900">
    <property type="entry name" value="RECA"/>
    <property type="match status" value="1"/>
</dbReference>
<dbReference type="Pfam" id="PF00154">
    <property type="entry name" value="RecA"/>
    <property type="match status" value="1"/>
</dbReference>
<dbReference type="PRINTS" id="PR00142">
    <property type="entry name" value="RECA"/>
</dbReference>
<dbReference type="SMART" id="SM00382">
    <property type="entry name" value="AAA"/>
    <property type="match status" value="1"/>
</dbReference>
<dbReference type="SUPFAM" id="SSF52540">
    <property type="entry name" value="P-loop containing nucleoside triphosphate hydrolases"/>
    <property type="match status" value="1"/>
</dbReference>
<dbReference type="PROSITE" id="PS00321">
    <property type="entry name" value="RECA_1"/>
    <property type="match status" value="1"/>
</dbReference>
<dbReference type="PROSITE" id="PS50162">
    <property type="entry name" value="RECA_2"/>
    <property type="match status" value="1"/>
</dbReference>
<dbReference type="PROSITE" id="PS50163">
    <property type="entry name" value="RECA_3"/>
    <property type="match status" value="1"/>
</dbReference>
<proteinExistence type="inferred from homology"/>
<feature type="chain" id="PRO_0000122783" description="Protein RecA">
    <location>
        <begin position="1" status="less than"/>
        <end position="237" status="greater than"/>
    </location>
</feature>
<feature type="binding site" evidence="1">
    <location>
        <begin position="26"/>
        <end position="33"/>
    </location>
    <ligand>
        <name>ATP</name>
        <dbReference type="ChEBI" id="CHEBI:30616"/>
    </ligand>
</feature>
<feature type="non-terminal residue">
    <location>
        <position position="1"/>
    </location>
</feature>
<feature type="non-terminal residue">
    <location>
        <position position="237"/>
    </location>
</feature>
<sequence>STGSLGLDLALGVGGLPRGRVVKIFGPESSGKTTLCLEAIAQCQKNGGICAFIDAEHAFDPVYARKLGIKVEELYLSQPDTGEQALEICDTLVRSGGVDMVVVDSVAALVPKAEIEGEMGDSHVGLQARLMSQALRKLTGHIKRTNTLVVFINQIRMKIGVMFGSPETTTGGNALKFYASVRLDIRRTGQIKKGDDVIGNETKVKVIKNKVAPPFRQAEFDILYGEGVSWEGELIDL</sequence>
<gene>
    <name type="primary">recA</name>
</gene>
<reference key="1">
    <citation type="submission" date="1998-01" db="EMBL/GenBank/DDBJ databases">
        <title>Do sexual bacteria have species?</title>
        <authorList>
            <person name="Smith N.H."/>
            <person name="Donovan G.M."/>
            <person name="Carpenter A."/>
            <person name="Spratt B.G."/>
        </authorList>
    </citation>
    <scope>NUCLEOTIDE SEQUENCE [GENOMIC DNA]</scope>
    <source>
        <strain>ATCC 29256 / DSM 17713 / CCUG 23929 / CIP 103345 / LMG 5290 / NRL 30016</strain>
    </source>
</reference>